<sequence length="71" mass="8370">MPAVKVKENEPFDVALRRFKRSCEKAGVLAEVRSREFYEKPTAERKRKAAAAVKRHAKKVQREQRRAVRLY</sequence>
<feature type="chain" id="PRO_1000120651" description="Small ribosomal subunit protein bS21">
    <location>
        <begin position="1"/>
        <end position="71"/>
    </location>
</feature>
<feature type="region of interest" description="Disordered" evidence="2">
    <location>
        <begin position="50"/>
        <end position="71"/>
    </location>
</feature>
<feature type="compositionally biased region" description="Basic residues" evidence="2">
    <location>
        <begin position="50"/>
        <end position="59"/>
    </location>
</feature>
<feature type="compositionally biased region" description="Basic and acidic residues" evidence="2">
    <location>
        <begin position="60"/>
        <end position="71"/>
    </location>
</feature>
<protein>
    <recommendedName>
        <fullName evidence="1">Small ribosomal subunit protein bS21</fullName>
    </recommendedName>
    <alternativeName>
        <fullName evidence="3">30S ribosomal protein S21</fullName>
    </alternativeName>
</protein>
<organism>
    <name type="scientific">Pseudomonas putida (strain W619)</name>
    <dbReference type="NCBI Taxonomy" id="390235"/>
    <lineage>
        <taxon>Bacteria</taxon>
        <taxon>Pseudomonadati</taxon>
        <taxon>Pseudomonadota</taxon>
        <taxon>Gammaproteobacteria</taxon>
        <taxon>Pseudomonadales</taxon>
        <taxon>Pseudomonadaceae</taxon>
        <taxon>Pseudomonas</taxon>
    </lineage>
</organism>
<keyword id="KW-0687">Ribonucleoprotein</keyword>
<keyword id="KW-0689">Ribosomal protein</keyword>
<accession>B1JDY6</accession>
<name>RS21_PSEPW</name>
<gene>
    <name evidence="1" type="primary">rpsU</name>
    <name type="ordered locus">PputW619_4813</name>
</gene>
<reference key="1">
    <citation type="submission" date="2008-02" db="EMBL/GenBank/DDBJ databases">
        <title>Complete sequence of Pseudomonas putida W619.</title>
        <authorList>
            <person name="Copeland A."/>
            <person name="Lucas S."/>
            <person name="Lapidus A."/>
            <person name="Barry K."/>
            <person name="Detter J.C."/>
            <person name="Glavina del Rio T."/>
            <person name="Dalin E."/>
            <person name="Tice H."/>
            <person name="Pitluck S."/>
            <person name="Chain P."/>
            <person name="Malfatti S."/>
            <person name="Shin M."/>
            <person name="Vergez L."/>
            <person name="Schmutz J."/>
            <person name="Larimer F."/>
            <person name="Land M."/>
            <person name="Hauser L."/>
            <person name="Kyrpides N."/>
            <person name="Kim E."/>
            <person name="Taghavi S."/>
            <person name="Vangronsveld D."/>
            <person name="van der Lelie D."/>
            <person name="Richardson P."/>
        </authorList>
    </citation>
    <scope>NUCLEOTIDE SEQUENCE [LARGE SCALE GENOMIC DNA]</scope>
    <source>
        <strain>W619</strain>
    </source>
</reference>
<comment type="similarity">
    <text evidence="1">Belongs to the bacterial ribosomal protein bS21 family.</text>
</comment>
<evidence type="ECO:0000255" key="1">
    <source>
        <dbReference type="HAMAP-Rule" id="MF_00358"/>
    </source>
</evidence>
<evidence type="ECO:0000256" key="2">
    <source>
        <dbReference type="SAM" id="MobiDB-lite"/>
    </source>
</evidence>
<evidence type="ECO:0000305" key="3"/>
<dbReference type="EMBL" id="CP000949">
    <property type="protein sequence ID" value="ACA75289.1"/>
    <property type="molecule type" value="Genomic_DNA"/>
</dbReference>
<dbReference type="SMR" id="B1JDY6"/>
<dbReference type="STRING" id="390235.PputW619_4813"/>
<dbReference type="KEGG" id="ppw:PputW619_4813"/>
<dbReference type="eggNOG" id="COG0828">
    <property type="taxonomic scope" value="Bacteria"/>
</dbReference>
<dbReference type="HOGENOM" id="CLU_159258_1_0_6"/>
<dbReference type="OrthoDB" id="9799244at2"/>
<dbReference type="GO" id="GO:1990904">
    <property type="term" value="C:ribonucleoprotein complex"/>
    <property type="evidence" value="ECO:0007669"/>
    <property type="project" value="UniProtKB-KW"/>
</dbReference>
<dbReference type="GO" id="GO:0005840">
    <property type="term" value="C:ribosome"/>
    <property type="evidence" value="ECO:0007669"/>
    <property type="project" value="UniProtKB-KW"/>
</dbReference>
<dbReference type="GO" id="GO:0003735">
    <property type="term" value="F:structural constituent of ribosome"/>
    <property type="evidence" value="ECO:0007669"/>
    <property type="project" value="InterPro"/>
</dbReference>
<dbReference type="GO" id="GO:0006412">
    <property type="term" value="P:translation"/>
    <property type="evidence" value="ECO:0007669"/>
    <property type="project" value="UniProtKB-UniRule"/>
</dbReference>
<dbReference type="Gene3D" id="1.20.5.1150">
    <property type="entry name" value="Ribosomal protein S8"/>
    <property type="match status" value="1"/>
</dbReference>
<dbReference type="HAMAP" id="MF_00358">
    <property type="entry name" value="Ribosomal_bS21"/>
    <property type="match status" value="1"/>
</dbReference>
<dbReference type="InterPro" id="IPR001911">
    <property type="entry name" value="Ribosomal_bS21"/>
</dbReference>
<dbReference type="InterPro" id="IPR018278">
    <property type="entry name" value="Ribosomal_bS21_CS"/>
</dbReference>
<dbReference type="InterPro" id="IPR038380">
    <property type="entry name" value="Ribosomal_bS21_sf"/>
</dbReference>
<dbReference type="NCBIfam" id="TIGR00030">
    <property type="entry name" value="S21p"/>
    <property type="match status" value="1"/>
</dbReference>
<dbReference type="PANTHER" id="PTHR21109">
    <property type="entry name" value="MITOCHONDRIAL 28S RIBOSOMAL PROTEIN S21"/>
    <property type="match status" value="1"/>
</dbReference>
<dbReference type="PANTHER" id="PTHR21109:SF22">
    <property type="entry name" value="SMALL RIBOSOMAL SUBUNIT PROTEIN BS21"/>
    <property type="match status" value="1"/>
</dbReference>
<dbReference type="Pfam" id="PF01165">
    <property type="entry name" value="Ribosomal_S21"/>
    <property type="match status" value="1"/>
</dbReference>
<dbReference type="PRINTS" id="PR00976">
    <property type="entry name" value="RIBOSOMALS21"/>
</dbReference>
<dbReference type="PROSITE" id="PS01181">
    <property type="entry name" value="RIBOSOMAL_S21"/>
    <property type="match status" value="1"/>
</dbReference>
<proteinExistence type="inferred from homology"/>